<sequence>MALTAEQKKEILGTYGLHDTDTGSPEAQVALLTKRIADLTEHLKVHKHDHHSRRGLLLLVGRRRRLLKYVAQIDVERYRSLVERLGLRR</sequence>
<name>RS15_MYCA1</name>
<gene>
    <name evidence="1" type="primary">rpsO</name>
    <name type="ordered locus">MAV_3677</name>
</gene>
<dbReference type="EMBL" id="CP000479">
    <property type="protein sequence ID" value="ABK68546.1"/>
    <property type="molecule type" value="Genomic_DNA"/>
</dbReference>
<dbReference type="RefSeq" id="WP_003878661.1">
    <property type="nucleotide sequence ID" value="NC_008595.1"/>
</dbReference>
<dbReference type="SMR" id="A0QIW6"/>
<dbReference type="GeneID" id="77301003"/>
<dbReference type="KEGG" id="mav:MAV_3677"/>
<dbReference type="HOGENOM" id="CLU_148518_0_0_11"/>
<dbReference type="Proteomes" id="UP000001574">
    <property type="component" value="Chromosome"/>
</dbReference>
<dbReference type="GO" id="GO:0022627">
    <property type="term" value="C:cytosolic small ribosomal subunit"/>
    <property type="evidence" value="ECO:0007669"/>
    <property type="project" value="TreeGrafter"/>
</dbReference>
<dbReference type="GO" id="GO:0019843">
    <property type="term" value="F:rRNA binding"/>
    <property type="evidence" value="ECO:0007669"/>
    <property type="project" value="UniProtKB-UniRule"/>
</dbReference>
<dbReference type="GO" id="GO:0003735">
    <property type="term" value="F:structural constituent of ribosome"/>
    <property type="evidence" value="ECO:0007669"/>
    <property type="project" value="InterPro"/>
</dbReference>
<dbReference type="GO" id="GO:0006412">
    <property type="term" value="P:translation"/>
    <property type="evidence" value="ECO:0007669"/>
    <property type="project" value="UniProtKB-UniRule"/>
</dbReference>
<dbReference type="CDD" id="cd00353">
    <property type="entry name" value="Ribosomal_S15p_S13e"/>
    <property type="match status" value="1"/>
</dbReference>
<dbReference type="FunFam" id="1.10.287.10:FF:000002">
    <property type="entry name" value="30S ribosomal protein S15"/>
    <property type="match status" value="1"/>
</dbReference>
<dbReference type="Gene3D" id="6.10.250.3130">
    <property type="match status" value="1"/>
</dbReference>
<dbReference type="Gene3D" id="1.10.287.10">
    <property type="entry name" value="S15/NS1, RNA-binding"/>
    <property type="match status" value="1"/>
</dbReference>
<dbReference type="HAMAP" id="MF_01343_B">
    <property type="entry name" value="Ribosomal_uS15_B"/>
    <property type="match status" value="1"/>
</dbReference>
<dbReference type="InterPro" id="IPR000589">
    <property type="entry name" value="Ribosomal_uS15"/>
</dbReference>
<dbReference type="InterPro" id="IPR005290">
    <property type="entry name" value="Ribosomal_uS15_bac-type"/>
</dbReference>
<dbReference type="InterPro" id="IPR009068">
    <property type="entry name" value="uS15_NS1_RNA-bd_sf"/>
</dbReference>
<dbReference type="NCBIfam" id="TIGR00952">
    <property type="entry name" value="S15_bact"/>
    <property type="match status" value="1"/>
</dbReference>
<dbReference type="PANTHER" id="PTHR23321">
    <property type="entry name" value="RIBOSOMAL PROTEIN S15, BACTERIAL AND ORGANELLAR"/>
    <property type="match status" value="1"/>
</dbReference>
<dbReference type="PANTHER" id="PTHR23321:SF26">
    <property type="entry name" value="SMALL RIBOSOMAL SUBUNIT PROTEIN US15M"/>
    <property type="match status" value="1"/>
</dbReference>
<dbReference type="Pfam" id="PF00312">
    <property type="entry name" value="Ribosomal_S15"/>
    <property type="match status" value="1"/>
</dbReference>
<dbReference type="SMART" id="SM01387">
    <property type="entry name" value="Ribosomal_S15"/>
    <property type="match status" value="1"/>
</dbReference>
<dbReference type="SUPFAM" id="SSF47060">
    <property type="entry name" value="S15/NS1 RNA-binding domain"/>
    <property type="match status" value="1"/>
</dbReference>
<dbReference type="PROSITE" id="PS00362">
    <property type="entry name" value="RIBOSOMAL_S15"/>
    <property type="match status" value="1"/>
</dbReference>
<feature type="chain" id="PRO_1000054817" description="Small ribosomal subunit protein uS15">
    <location>
        <begin position="1"/>
        <end position="89"/>
    </location>
</feature>
<comment type="function">
    <text evidence="1">One of the primary rRNA binding proteins, it binds directly to 16S rRNA where it helps nucleate assembly of the platform of the 30S subunit by binding and bridging several RNA helices of the 16S rRNA.</text>
</comment>
<comment type="function">
    <text evidence="1">Forms an intersubunit bridge (bridge B4) with the 23S rRNA of the 50S subunit in the ribosome.</text>
</comment>
<comment type="subunit">
    <text evidence="1">Part of the 30S ribosomal subunit. Forms a bridge to the 50S subunit in the 70S ribosome, contacting the 23S rRNA.</text>
</comment>
<comment type="similarity">
    <text evidence="1">Belongs to the universal ribosomal protein uS15 family.</text>
</comment>
<organism>
    <name type="scientific">Mycobacterium avium (strain 104)</name>
    <dbReference type="NCBI Taxonomy" id="243243"/>
    <lineage>
        <taxon>Bacteria</taxon>
        <taxon>Bacillati</taxon>
        <taxon>Actinomycetota</taxon>
        <taxon>Actinomycetes</taxon>
        <taxon>Mycobacteriales</taxon>
        <taxon>Mycobacteriaceae</taxon>
        <taxon>Mycobacterium</taxon>
        <taxon>Mycobacterium avium complex (MAC)</taxon>
    </lineage>
</organism>
<protein>
    <recommendedName>
        <fullName evidence="1">Small ribosomal subunit protein uS15</fullName>
    </recommendedName>
    <alternativeName>
        <fullName evidence="2">30S ribosomal protein S15</fullName>
    </alternativeName>
</protein>
<proteinExistence type="inferred from homology"/>
<accession>A0QIW6</accession>
<keyword id="KW-0687">Ribonucleoprotein</keyword>
<keyword id="KW-0689">Ribosomal protein</keyword>
<keyword id="KW-0694">RNA-binding</keyword>
<keyword id="KW-0699">rRNA-binding</keyword>
<reference key="1">
    <citation type="submission" date="2006-10" db="EMBL/GenBank/DDBJ databases">
        <authorList>
            <person name="Fleischmann R.D."/>
            <person name="Dodson R.J."/>
            <person name="Haft D.H."/>
            <person name="Merkel J.S."/>
            <person name="Nelson W.C."/>
            <person name="Fraser C.M."/>
        </authorList>
    </citation>
    <scope>NUCLEOTIDE SEQUENCE [LARGE SCALE GENOMIC DNA]</scope>
    <source>
        <strain>104</strain>
    </source>
</reference>
<evidence type="ECO:0000255" key="1">
    <source>
        <dbReference type="HAMAP-Rule" id="MF_01343"/>
    </source>
</evidence>
<evidence type="ECO:0000305" key="2"/>